<protein>
    <recommendedName>
        <fullName>Arginine decarboxylase</fullName>
        <shortName>ADC</shortName>
        <shortName>ARGDC</shortName>
        <ecNumber>4.1.1.19</ecNumber>
    </recommendedName>
</protein>
<gene>
    <name type="primary">SPE1</name>
</gene>
<keyword id="KW-0210">Decarboxylase</keyword>
<keyword id="KW-0903">Direct protein sequencing</keyword>
<keyword id="KW-0456">Lyase</keyword>
<keyword id="KW-0460">Magnesium</keyword>
<keyword id="KW-0661">Putrescine biosynthesis</keyword>
<keyword id="KW-0663">Pyridoxal phosphate</keyword>
<keyword id="KW-0745">Spermidine biosynthesis</keyword>
<evidence type="ECO:0000250" key="1"/>
<evidence type="ECO:0000305" key="2"/>
<name>SPE1_AVESA</name>
<accession>P22220</accession>
<dbReference type="EC" id="4.1.1.19"/>
<dbReference type="EMBL" id="X56802">
    <property type="protein sequence ID" value="CAA40137.1"/>
    <property type="molecule type" value="mRNA"/>
</dbReference>
<dbReference type="PIR" id="S12265">
    <property type="entry name" value="S12265"/>
</dbReference>
<dbReference type="SMR" id="P22220"/>
<dbReference type="BioCyc" id="MetaCyc:MONOMER-14981"/>
<dbReference type="BRENDA" id="4.1.1.19">
    <property type="organism ID" value="588"/>
</dbReference>
<dbReference type="SABIO-RK" id="P22220"/>
<dbReference type="UniPathway" id="UPA00186">
    <property type="reaction ID" value="UER00284"/>
</dbReference>
<dbReference type="GO" id="GO:0008792">
    <property type="term" value="F:arginine decarboxylase activity"/>
    <property type="evidence" value="ECO:0007669"/>
    <property type="project" value="UniProtKB-EC"/>
</dbReference>
<dbReference type="GO" id="GO:0006527">
    <property type="term" value="P:arginine catabolic process"/>
    <property type="evidence" value="ECO:0007669"/>
    <property type="project" value="InterPro"/>
</dbReference>
<dbReference type="GO" id="GO:0009446">
    <property type="term" value="P:putrescine biosynthetic process"/>
    <property type="evidence" value="ECO:0007669"/>
    <property type="project" value="UniProtKB-KW"/>
</dbReference>
<dbReference type="GO" id="GO:0008295">
    <property type="term" value="P:spermidine biosynthetic process"/>
    <property type="evidence" value="ECO:0007669"/>
    <property type="project" value="UniProtKB-KW"/>
</dbReference>
<dbReference type="CDD" id="cd06830">
    <property type="entry name" value="PLPDE_III_ADC"/>
    <property type="match status" value="1"/>
</dbReference>
<dbReference type="Gene3D" id="1.20.58.930">
    <property type="match status" value="1"/>
</dbReference>
<dbReference type="Gene3D" id="3.20.20.10">
    <property type="entry name" value="Alanine racemase"/>
    <property type="match status" value="1"/>
</dbReference>
<dbReference type="Gene3D" id="2.40.37.10">
    <property type="entry name" value="Lyase, Ornithine Decarboxylase, Chain A, domain 1"/>
    <property type="match status" value="2"/>
</dbReference>
<dbReference type="InterPro" id="IPR009006">
    <property type="entry name" value="Ala_racemase/Decarboxylase_C"/>
</dbReference>
<dbReference type="InterPro" id="IPR002985">
    <property type="entry name" value="Arg_decrbxlase"/>
</dbReference>
<dbReference type="InterPro" id="IPR022657">
    <property type="entry name" value="De-COase2_CS"/>
</dbReference>
<dbReference type="InterPro" id="IPR022644">
    <property type="entry name" value="De-COase2_N"/>
</dbReference>
<dbReference type="InterPro" id="IPR022653">
    <property type="entry name" value="De-COase2_pyr-phos_BS"/>
</dbReference>
<dbReference type="InterPro" id="IPR000183">
    <property type="entry name" value="Orn/DAP/Arg_de-COase"/>
</dbReference>
<dbReference type="InterPro" id="IPR029066">
    <property type="entry name" value="PLP-binding_barrel"/>
</dbReference>
<dbReference type="NCBIfam" id="NF003763">
    <property type="entry name" value="PRK05354.1"/>
    <property type="match status" value="1"/>
</dbReference>
<dbReference type="PANTHER" id="PTHR43295">
    <property type="entry name" value="ARGININE DECARBOXYLASE"/>
    <property type="match status" value="1"/>
</dbReference>
<dbReference type="PANTHER" id="PTHR43295:SF2">
    <property type="entry name" value="ARGININE DECARBOXYLASE 2"/>
    <property type="match status" value="1"/>
</dbReference>
<dbReference type="Pfam" id="PF02784">
    <property type="entry name" value="Orn_Arg_deC_N"/>
    <property type="match status" value="1"/>
</dbReference>
<dbReference type="PIRSF" id="PIRSF001336">
    <property type="entry name" value="Arg_decrbxlase"/>
    <property type="match status" value="1"/>
</dbReference>
<dbReference type="PRINTS" id="PR01180">
    <property type="entry name" value="ARGDCRBXLASE"/>
</dbReference>
<dbReference type="PRINTS" id="PR01179">
    <property type="entry name" value="ODADCRBXLASE"/>
</dbReference>
<dbReference type="SUPFAM" id="SSF50621">
    <property type="entry name" value="Alanine racemase C-terminal domain-like"/>
    <property type="match status" value="1"/>
</dbReference>
<dbReference type="SUPFAM" id="SSF51419">
    <property type="entry name" value="PLP-binding barrel"/>
    <property type="match status" value="1"/>
</dbReference>
<dbReference type="PROSITE" id="PS00878">
    <property type="entry name" value="ODR_DC_2_1"/>
    <property type="match status" value="1"/>
</dbReference>
<dbReference type="PROSITE" id="PS00879">
    <property type="entry name" value="ODR_DC_2_2"/>
    <property type="match status" value="1"/>
</dbReference>
<comment type="catalytic activity">
    <reaction>
        <text>L-arginine + H(+) = agmatine + CO2</text>
        <dbReference type="Rhea" id="RHEA:17641"/>
        <dbReference type="ChEBI" id="CHEBI:15378"/>
        <dbReference type="ChEBI" id="CHEBI:16526"/>
        <dbReference type="ChEBI" id="CHEBI:32682"/>
        <dbReference type="ChEBI" id="CHEBI:58145"/>
        <dbReference type="EC" id="4.1.1.19"/>
    </reaction>
</comment>
<comment type="cofactor">
    <cofactor>
        <name>pyridoxal 5'-phosphate</name>
        <dbReference type="ChEBI" id="CHEBI:597326"/>
    </cofactor>
</comment>
<comment type="cofactor">
    <cofactor>
        <name>Mg(2+)</name>
        <dbReference type="ChEBI" id="CHEBI:18420"/>
    </cofactor>
</comment>
<comment type="pathway">
    <text>Amine and polyamine biosynthesis; agmatine biosynthesis; agmatine from L-arginine: step 1/1.</text>
</comment>
<comment type="similarity">
    <text evidence="2">Belongs to the Orn/Lys/Arg decarboxylase class-II family. SpeA subfamily.</text>
</comment>
<proteinExistence type="evidence at protein level"/>
<sequence>MAKNYGDVYHVEGWGEPYFAVNKDGHLCVRIYGRETLPGQEIDVLSVIEQATSADGTGKKLQFPMILRFPDVLRHRINSLHTAFANAIKYTQYGSVYQGVFPVKVNQHKDVVQDMVHFGYDHSYGLEAGSKPELLIAMSCLTKAKPGAYLVCNGYKDSAYVALALAARAMGLNVIIVLEMEEELDIVIEESSKLGVEPVIGVRAKLLTKIPGHFGSTAGKHGKFGLPAEKIYEVAKKLKALNKLHWLKLLHFHVGSMIPTTDIVFKAASEASDIYCALVKEYGVETMTTLDCGGGLGVDYDGTRSGSSDMSVAYGLEEYASSIVQAVRLKCDYHGVPHPVLCTESGRAMASYHSMIILEALSAIPEPKDDEDEATTEQLHGRIRDLSSKLQPTGLSMSSHAVHIKKHGIEMYKLGKKLSKSVTTDAHTIYNYHMNLSVFSLMPDYWGIQHLFPMMPVSRLDEKPTHKATLVDVTCDSDGKVDKFIRDTETMPLHPLDPKLGGYYVAVLLTGAYQEALSNKHNLFGGPSLVRVVGTGNGGAFNVEAALLGSTTEELIGTVSYDVKQDISSVIEERARENKVWEMVEKLVESGLHTMPYLADYKPPPMA</sequence>
<feature type="chain" id="PRO_0000149948" description="Arginine decarboxylase">
    <location>
        <begin position="1"/>
        <end position="607"/>
    </location>
</feature>
<feature type="binding site" evidence="1">
    <location>
        <begin position="290"/>
        <end position="300"/>
    </location>
    <ligand>
        <name>substrate</name>
    </ligand>
</feature>
<feature type="modified residue" description="N6-(pyridoxal phosphate)lysine" evidence="1">
    <location>
        <position position="104"/>
    </location>
</feature>
<organism>
    <name type="scientific">Avena sativa</name>
    <name type="common">Oat</name>
    <dbReference type="NCBI Taxonomy" id="4498"/>
    <lineage>
        <taxon>Eukaryota</taxon>
        <taxon>Viridiplantae</taxon>
        <taxon>Streptophyta</taxon>
        <taxon>Embryophyta</taxon>
        <taxon>Tracheophyta</taxon>
        <taxon>Spermatophyta</taxon>
        <taxon>Magnoliopsida</taxon>
        <taxon>Liliopsida</taxon>
        <taxon>Poales</taxon>
        <taxon>Poaceae</taxon>
        <taxon>BOP clade</taxon>
        <taxon>Pooideae</taxon>
        <taxon>Poodae</taxon>
        <taxon>Poeae</taxon>
        <taxon>Poeae Chloroplast Group 1 (Aveneae type)</taxon>
        <taxon>Aveninae</taxon>
        <taxon>Avena</taxon>
    </lineage>
</organism>
<reference key="1">
    <citation type="journal article" date="1990" name="Mol. Gen. Genet.">
        <title>Analysis of a cDNA encoding arginine decarboxylase from oat reveals similarity to the Escherichia coli arginine decarboxylase and evidence of protein processing.</title>
        <authorList>
            <person name="Bell E."/>
            <person name="Malmberg R.L."/>
        </authorList>
    </citation>
    <scope>NUCLEOTIDE SEQUENCE [MRNA]</scope>
    <scope>PROTEIN SEQUENCE OF 427-437</scope>
    <source>
        <tissue>Leaf</tissue>
    </source>
</reference>